<gene>
    <name evidence="1" type="primary">nrdR</name>
    <name type="ordered locus">ACICU_00245</name>
</gene>
<comment type="function">
    <text evidence="1">Negatively regulates transcription of bacterial ribonucleotide reductase nrd genes and operons by binding to NrdR-boxes.</text>
</comment>
<comment type="cofactor">
    <cofactor evidence="1">
        <name>Zn(2+)</name>
        <dbReference type="ChEBI" id="CHEBI:29105"/>
    </cofactor>
    <text evidence="1">Binds 1 zinc ion.</text>
</comment>
<comment type="similarity">
    <text evidence="1">Belongs to the NrdR family.</text>
</comment>
<dbReference type="EMBL" id="CP000863">
    <property type="protein sequence ID" value="ACC55557.1"/>
    <property type="molecule type" value="Genomic_DNA"/>
</dbReference>
<dbReference type="RefSeq" id="WP_000543541.1">
    <property type="nucleotide sequence ID" value="NZ_CP031380.1"/>
</dbReference>
<dbReference type="SMR" id="B2I1T3"/>
<dbReference type="GeneID" id="92892221"/>
<dbReference type="KEGG" id="abc:ACICU_00245"/>
<dbReference type="HOGENOM" id="CLU_108412_0_0_6"/>
<dbReference type="Proteomes" id="UP000008839">
    <property type="component" value="Chromosome"/>
</dbReference>
<dbReference type="GO" id="GO:0005524">
    <property type="term" value="F:ATP binding"/>
    <property type="evidence" value="ECO:0007669"/>
    <property type="project" value="UniProtKB-KW"/>
</dbReference>
<dbReference type="GO" id="GO:0003677">
    <property type="term" value="F:DNA binding"/>
    <property type="evidence" value="ECO:0007669"/>
    <property type="project" value="UniProtKB-KW"/>
</dbReference>
<dbReference type="GO" id="GO:0008270">
    <property type="term" value="F:zinc ion binding"/>
    <property type="evidence" value="ECO:0007669"/>
    <property type="project" value="UniProtKB-UniRule"/>
</dbReference>
<dbReference type="GO" id="GO:0045892">
    <property type="term" value="P:negative regulation of DNA-templated transcription"/>
    <property type="evidence" value="ECO:0007669"/>
    <property type="project" value="UniProtKB-UniRule"/>
</dbReference>
<dbReference type="HAMAP" id="MF_00440">
    <property type="entry name" value="NrdR"/>
    <property type="match status" value="1"/>
</dbReference>
<dbReference type="InterPro" id="IPR005144">
    <property type="entry name" value="ATP-cone_dom"/>
</dbReference>
<dbReference type="InterPro" id="IPR055173">
    <property type="entry name" value="NrdR-like_N"/>
</dbReference>
<dbReference type="InterPro" id="IPR003796">
    <property type="entry name" value="RNR_NrdR-like"/>
</dbReference>
<dbReference type="NCBIfam" id="TIGR00244">
    <property type="entry name" value="transcriptional regulator NrdR"/>
    <property type="match status" value="1"/>
</dbReference>
<dbReference type="PANTHER" id="PTHR30455">
    <property type="entry name" value="TRANSCRIPTIONAL REPRESSOR NRDR"/>
    <property type="match status" value="1"/>
</dbReference>
<dbReference type="PANTHER" id="PTHR30455:SF2">
    <property type="entry name" value="TRANSCRIPTIONAL REPRESSOR NRDR"/>
    <property type="match status" value="1"/>
</dbReference>
<dbReference type="Pfam" id="PF03477">
    <property type="entry name" value="ATP-cone"/>
    <property type="match status" value="1"/>
</dbReference>
<dbReference type="Pfam" id="PF22811">
    <property type="entry name" value="Zn_ribbon_NrdR"/>
    <property type="match status" value="1"/>
</dbReference>
<dbReference type="PROSITE" id="PS51161">
    <property type="entry name" value="ATP_CONE"/>
    <property type="match status" value="1"/>
</dbReference>
<evidence type="ECO:0000255" key="1">
    <source>
        <dbReference type="HAMAP-Rule" id="MF_00440"/>
    </source>
</evidence>
<protein>
    <recommendedName>
        <fullName evidence="1">Transcriptional repressor NrdR</fullName>
    </recommendedName>
</protein>
<reference key="1">
    <citation type="journal article" date="2008" name="Antimicrob. Agents Chemother.">
        <title>Whole-genome pyrosequencing of an epidemic multidrug-resistant Acinetobacter baumannii strain belonging to the European clone II group.</title>
        <authorList>
            <person name="Iacono M."/>
            <person name="Villa L."/>
            <person name="Fortini D."/>
            <person name="Bordoni R."/>
            <person name="Imperi F."/>
            <person name="Bonnal R.J."/>
            <person name="Sicheritz-Ponten T."/>
            <person name="De Bellis G."/>
            <person name="Visca P."/>
            <person name="Cassone A."/>
            <person name="Carattoli A."/>
        </authorList>
    </citation>
    <scope>NUCLEOTIDE SEQUENCE [LARGE SCALE GENOMIC DNA]</scope>
    <source>
        <strain>ACICU</strain>
    </source>
</reference>
<accession>B2I1T3</accession>
<keyword id="KW-0067">ATP-binding</keyword>
<keyword id="KW-0238">DNA-binding</keyword>
<keyword id="KW-0479">Metal-binding</keyword>
<keyword id="KW-0547">Nucleotide-binding</keyword>
<keyword id="KW-0678">Repressor</keyword>
<keyword id="KW-0804">Transcription</keyword>
<keyword id="KW-0805">Transcription regulation</keyword>
<keyword id="KW-0862">Zinc</keyword>
<keyword id="KW-0863">Zinc-finger</keyword>
<name>NRDR_ACIBC</name>
<sequence>MHCPFCNAADSKVIDSRLAAEGCQIRRRRECVSCGERFTTFESYEVVMPRVIKSNGKNEPFDEAKLRRSLMHALQKRPVTQEQIETVLSDIQLQIRRLGERDVKSRTIGEIVMQSLFALDHVAYVRFASVYQDFQDVEAFRRQIEQMQQREH</sequence>
<feature type="chain" id="PRO_1000191768" description="Transcriptional repressor NrdR">
    <location>
        <begin position="1"/>
        <end position="152"/>
    </location>
</feature>
<feature type="domain" description="ATP-cone" evidence="1">
    <location>
        <begin position="49"/>
        <end position="139"/>
    </location>
</feature>
<feature type="zinc finger region" evidence="1">
    <location>
        <begin position="3"/>
        <end position="34"/>
    </location>
</feature>
<proteinExistence type="inferred from homology"/>
<organism>
    <name type="scientific">Acinetobacter baumannii (strain ACICU)</name>
    <dbReference type="NCBI Taxonomy" id="405416"/>
    <lineage>
        <taxon>Bacteria</taxon>
        <taxon>Pseudomonadati</taxon>
        <taxon>Pseudomonadota</taxon>
        <taxon>Gammaproteobacteria</taxon>
        <taxon>Moraxellales</taxon>
        <taxon>Moraxellaceae</taxon>
        <taxon>Acinetobacter</taxon>
        <taxon>Acinetobacter calcoaceticus/baumannii complex</taxon>
    </lineage>
</organism>